<feature type="chain" id="PRO_0000277610" description="Inactive ADP-ribosyltransferase arh2">
    <location>
        <begin position="1"/>
        <end position="350"/>
    </location>
</feature>
<evidence type="ECO:0000250" key="1">
    <source>
        <dbReference type="UniProtKB" id="Q6AZR2"/>
    </source>
</evidence>
<evidence type="ECO:0000250" key="2">
    <source>
        <dbReference type="UniProtKB" id="Q8BGK2"/>
    </source>
</evidence>
<evidence type="ECO:0000305" key="3"/>
<keyword id="KW-0963">Cytoplasm</keyword>
<keyword id="KW-1185">Reference proteome</keyword>
<protein>
    <recommendedName>
        <fullName evidence="3">Inactive ADP-ribosyltransferase arh2</fullName>
    </recommendedName>
    <alternativeName>
        <fullName evidence="3">ADP-ribosylhydrolase-like protein 1</fullName>
    </alternativeName>
    <alternativeName>
        <fullName>[Protein ADP-ribosylarginine] hydrolase-like protein 1</fullName>
    </alternativeName>
</protein>
<organism>
    <name type="scientific">Danio rerio</name>
    <name type="common">Zebrafish</name>
    <name type="synonym">Brachydanio rerio</name>
    <dbReference type="NCBI Taxonomy" id="7955"/>
    <lineage>
        <taxon>Eukaryota</taxon>
        <taxon>Metazoa</taxon>
        <taxon>Chordata</taxon>
        <taxon>Craniata</taxon>
        <taxon>Vertebrata</taxon>
        <taxon>Euteleostomi</taxon>
        <taxon>Actinopterygii</taxon>
        <taxon>Neopterygii</taxon>
        <taxon>Teleostei</taxon>
        <taxon>Ostariophysi</taxon>
        <taxon>Cypriniformes</taxon>
        <taxon>Danionidae</taxon>
        <taxon>Danioninae</taxon>
        <taxon>Danio</taxon>
    </lineage>
</organism>
<dbReference type="EMBL" id="BC083385">
    <property type="protein sequence ID" value="AAH83385.1"/>
    <property type="molecule type" value="mRNA"/>
</dbReference>
<dbReference type="RefSeq" id="NP_001006033.1">
    <property type="nucleotide sequence ID" value="NM_001006033.2"/>
</dbReference>
<dbReference type="SMR" id="Q5XJB9"/>
<dbReference type="FunCoup" id="Q5XJB9">
    <property type="interactions" value="118"/>
</dbReference>
<dbReference type="STRING" id="7955.ENSDARP00000060967"/>
<dbReference type="PaxDb" id="7955-ENSDARP00000060967"/>
<dbReference type="Ensembl" id="ENSDART00000060968">
    <property type="protein sequence ID" value="ENSDARP00000060967"/>
    <property type="gene ID" value="ENSDARG00000041589"/>
</dbReference>
<dbReference type="GeneID" id="450012"/>
<dbReference type="KEGG" id="dre:450012"/>
<dbReference type="AGR" id="ZFIN:ZDB-GENE-041010-126"/>
<dbReference type="CTD" id="113622"/>
<dbReference type="ZFIN" id="ZDB-GENE-041010-126">
    <property type="gene designation" value="adprhl1"/>
</dbReference>
<dbReference type="eggNOG" id="ENOG502QPMI">
    <property type="taxonomic scope" value="Eukaryota"/>
</dbReference>
<dbReference type="InParanoid" id="Q5XJB9"/>
<dbReference type="OMA" id="LVTDFWC"/>
<dbReference type="OrthoDB" id="10250509at2759"/>
<dbReference type="PhylomeDB" id="Q5XJB9"/>
<dbReference type="TreeFam" id="TF329417"/>
<dbReference type="PRO" id="PR:Q5XJB9"/>
<dbReference type="Proteomes" id="UP000000437">
    <property type="component" value="Chromosome 1"/>
</dbReference>
<dbReference type="Bgee" id="ENSDARG00000041589">
    <property type="expression patterns" value="Expressed in heart and 9 other cell types or tissues"/>
</dbReference>
<dbReference type="GO" id="GO:0030017">
    <property type="term" value="C:sarcomere"/>
    <property type="evidence" value="ECO:0000250"/>
    <property type="project" value="UniProtKB"/>
</dbReference>
<dbReference type="GO" id="GO:0003875">
    <property type="term" value="F:ADP-ribosylarginine hydrolase activity"/>
    <property type="evidence" value="ECO:0007669"/>
    <property type="project" value="InterPro"/>
</dbReference>
<dbReference type="GO" id="GO:0000287">
    <property type="term" value="F:magnesium ion binding"/>
    <property type="evidence" value="ECO:0007669"/>
    <property type="project" value="InterPro"/>
</dbReference>
<dbReference type="GO" id="GO:0003242">
    <property type="term" value="P:cardiac chamber ballooning"/>
    <property type="evidence" value="ECO:0000250"/>
    <property type="project" value="UniProtKB"/>
</dbReference>
<dbReference type="GO" id="GO:0055003">
    <property type="term" value="P:cardiac myofibril assembly"/>
    <property type="evidence" value="ECO:0000250"/>
    <property type="project" value="UniProtKB"/>
</dbReference>
<dbReference type="GO" id="GO:0051725">
    <property type="term" value="P:protein de-ADP-ribosylation"/>
    <property type="evidence" value="ECO:0007669"/>
    <property type="project" value="InterPro"/>
</dbReference>
<dbReference type="FunFam" id="1.10.4080.10:FF:000002">
    <property type="entry name" value="ADP-ribosylarginine hydrolase isoform X1"/>
    <property type="match status" value="1"/>
</dbReference>
<dbReference type="Gene3D" id="1.10.4080.10">
    <property type="entry name" value="ADP-ribosylation/Crystallin J1"/>
    <property type="match status" value="1"/>
</dbReference>
<dbReference type="InterPro" id="IPR012108">
    <property type="entry name" value="ADP-ribosylarg_hydro"/>
</dbReference>
<dbReference type="InterPro" id="IPR050792">
    <property type="entry name" value="ADP-ribosylglycohydrolase"/>
</dbReference>
<dbReference type="InterPro" id="IPR005502">
    <property type="entry name" value="Ribosyl_crysJ1"/>
</dbReference>
<dbReference type="InterPro" id="IPR036705">
    <property type="entry name" value="Ribosyl_crysJ1_sf"/>
</dbReference>
<dbReference type="PANTHER" id="PTHR16222">
    <property type="entry name" value="ADP-RIBOSYLGLYCOHYDROLASE"/>
    <property type="match status" value="1"/>
</dbReference>
<dbReference type="PANTHER" id="PTHR16222:SF23">
    <property type="entry name" value="INACTIVE ADP-RIBOSYLTRANSFERASE ARH2"/>
    <property type="match status" value="1"/>
</dbReference>
<dbReference type="Pfam" id="PF03747">
    <property type="entry name" value="ADP_ribosyl_GH"/>
    <property type="match status" value="1"/>
</dbReference>
<dbReference type="PIRSF" id="PIRSF016939">
    <property type="entry name" value="ADP_ribslarg_hdr"/>
    <property type="match status" value="1"/>
</dbReference>
<dbReference type="SUPFAM" id="SSF101478">
    <property type="entry name" value="ADP-ribosylglycohydrolase"/>
    <property type="match status" value="1"/>
</dbReference>
<comment type="function">
    <text evidence="1 2">Required for myofibril assembly and outgrowth of the cardiac chambers in the developing heart (By similarity). Appears to be catalytically inactive, showing no activity against O-acetyl-ADP-ribose (By similarity).</text>
</comment>
<comment type="subcellular location">
    <subcellularLocation>
        <location evidence="1">Cytoplasm</location>
        <location evidence="1">Myofibril</location>
        <location evidence="1">Sarcomere</location>
    </subcellularLocation>
</comment>
<comment type="similarity">
    <text evidence="3">Belongs to the ADP-ribosylglycohydrolase family.</text>
</comment>
<comment type="caution">
    <text evidence="1">Although it belongs to the ADP-ribosylglycohydrolase family, lacks the metal-binding and substrate-binding residues, suggesting that it has no hydrolase activity.</text>
</comment>
<sequence>MEKFQAAMVLGAVGDALGSRWQTCSSGSQIQQELRALGGLAALKLDAEHWPLSDGALMHMTTAEALITDYWCLEDLYRELVRLYVEAMVSLQGRVPEPSTVEGCANLKPHNFLLAWHTPFNEKGSGHGAATKAMCIGMRYWQPERLHTLVEVSIEAGRMTHNHPIGFLGSLCTALFASFAVQGRPLVSWGRELLKTLPKAEEYCRKTIRHMAEYQETWFYFEAKWQFYLEERGIEDGQSKPSFPERYDADETDRMYKRWSSEGCAGRRGHDAPMIAYDALLAAGSDWEELCRRAILHGGESSATGLISGCLFGLLHGLSAAPTGLHQDLDRREKLQDLGERLYRAAALEK</sequence>
<name>ARHL1_DANRE</name>
<gene>
    <name type="primary">adprhl1</name>
    <name type="synonym">arh2</name>
    <name type="ORF">zgc:103446</name>
</gene>
<proteinExistence type="evidence at transcript level"/>
<reference key="1">
    <citation type="submission" date="2004-10" db="EMBL/GenBank/DDBJ databases">
        <authorList>
            <consortium name="NIH - Zebrafish Gene Collection (ZGC) project"/>
        </authorList>
    </citation>
    <scope>NUCLEOTIDE SEQUENCE [LARGE SCALE MRNA]</scope>
    <source>
        <tissue>Heart</tissue>
    </source>
</reference>
<accession>Q5XJB9</accession>